<evidence type="ECO:0000255" key="1">
    <source>
        <dbReference type="HAMAP-Rule" id="MF_01346"/>
    </source>
</evidence>
<sequence>MAINAQEISALIKQQIENFKPNFDVTETGVVTYIGDGIARAHGLENVMSGELLNFENGSYGMAQNLESTDVGIIILGDFTDIREGDTIRRTGKIMEVPVGESLIGRVVDPLGRPVDGLGEIHTDKTRPVEAPAPGVMQRKSVSEPLQTGLKAIDALVPIGRGQRELIIGDRQTGKTTIAIDTILNQKDQDMICIYVAIGQKESTVRTQVETLRQYGALDYTIVVTASASQPSPLLFLAPYTGVAMAEEFMYQGKHVLIVYDDLSKQAVAYRELSLLLRRPPGREAFPGDVFYLHSRLLERSAKVSDELGGGSITALPFIETQAGDISAYIATNVISITDGQIFLGDGLFNAGIRPAIDAGSSVSRVGGSAQIKAMKKVAGTLRIDLASYRELEAFTKFGSDLDAATQAKLNRGRRTVEVLKQPVHKPLPVEKQVTILYALTHGFLDTVPVDDIVRFEEEFHTFFDAQHPEILETIRDTKDLPEEAVLDAAITEFLNQSSFQ</sequence>
<accession>B5E673</accession>
<gene>
    <name evidence="1" type="primary">atpA</name>
    <name type="ordered locus">SPG_1433</name>
</gene>
<feature type="chain" id="PRO_1000143443" description="ATP synthase subunit alpha">
    <location>
        <begin position="1"/>
        <end position="501"/>
    </location>
</feature>
<feature type="binding site" evidence="1">
    <location>
        <begin position="169"/>
        <end position="176"/>
    </location>
    <ligand>
        <name>ATP</name>
        <dbReference type="ChEBI" id="CHEBI:30616"/>
    </ligand>
</feature>
<feature type="site" description="Required for activity" evidence="1">
    <location>
        <position position="362"/>
    </location>
</feature>
<keyword id="KW-0066">ATP synthesis</keyword>
<keyword id="KW-0067">ATP-binding</keyword>
<keyword id="KW-1003">Cell membrane</keyword>
<keyword id="KW-0139">CF(1)</keyword>
<keyword id="KW-0375">Hydrogen ion transport</keyword>
<keyword id="KW-0406">Ion transport</keyword>
<keyword id="KW-0472">Membrane</keyword>
<keyword id="KW-0547">Nucleotide-binding</keyword>
<keyword id="KW-1278">Translocase</keyword>
<keyword id="KW-0813">Transport</keyword>
<protein>
    <recommendedName>
        <fullName evidence="1">ATP synthase subunit alpha</fullName>
        <ecNumber evidence="1">7.1.2.2</ecNumber>
    </recommendedName>
    <alternativeName>
        <fullName evidence="1">ATP synthase F1 sector subunit alpha</fullName>
    </alternativeName>
    <alternativeName>
        <fullName evidence="1">F-ATPase subunit alpha</fullName>
    </alternativeName>
</protein>
<name>ATPA_STRP4</name>
<dbReference type="EC" id="7.1.2.2" evidence="1"/>
<dbReference type="EMBL" id="CP001015">
    <property type="protein sequence ID" value="ACF56358.1"/>
    <property type="molecule type" value="Genomic_DNA"/>
</dbReference>
<dbReference type="SMR" id="B5E673"/>
<dbReference type="KEGG" id="spx:SPG_1433"/>
<dbReference type="HOGENOM" id="CLU_010091_2_1_9"/>
<dbReference type="GO" id="GO:0005886">
    <property type="term" value="C:plasma membrane"/>
    <property type="evidence" value="ECO:0007669"/>
    <property type="project" value="UniProtKB-SubCell"/>
</dbReference>
<dbReference type="GO" id="GO:0045259">
    <property type="term" value="C:proton-transporting ATP synthase complex"/>
    <property type="evidence" value="ECO:0007669"/>
    <property type="project" value="UniProtKB-KW"/>
</dbReference>
<dbReference type="GO" id="GO:0043531">
    <property type="term" value="F:ADP binding"/>
    <property type="evidence" value="ECO:0007669"/>
    <property type="project" value="TreeGrafter"/>
</dbReference>
<dbReference type="GO" id="GO:0005524">
    <property type="term" value="F:ATP binding"/>
    <property type="evidence" value="ECO:0007669"/>
    <property type="project" value="UniProtKB-UniRule"/>
</dbReference>
<dbReference type="GO" id="GO:0046933">
    <property type="term" value="F:proton-transporting ATP synthase activity, rotational mechanism"/>
    <property type="evidence" value="ECO:0007669"/>
    <property type="project" value="UniProtKB-UniRule"/>
</dbReference>
<dbReference type="CDD" id="cd18113">
    <property type="entry name" value="ATP-synt_F1_alpha_C"/>
    <property type="match status" value="1"/>
</dbReference>
<dbReference type="CDD" id="cd18116">
    <property type="entry name" value="ATP-synt_F1_alpha_N"/>
    <property type="match status" value="1"/>
</dbReference>
<dbReference type="CDD" id="cd01132">
    <property type="entry name" value="F1-ATPase_alpha_CD"/>
    <property type="match status" value="1"/>
</dbReference>
<dbReference type="FunFam" id="1.20.150.20:FF:000001">
    <property type="entry name" value="ATP synthase subunit alpha"/>
    <property type="match status" value="1"/>
</dbReference>
<dbReference type="FunFam" id="2.40.30.20:FF:000001">
    <property type="entry name" value="ATP synthase subunit alpha"/>
    <property type="match status" value="1"/>
</dbReference>
<dbReference type="FunFam" id="3.40.50.300:FF:000002">
    <property type="entry name" value="ATP synthase subunit alpha"/>
    <property type="match status" value="1"/>
</dbReference>
<dbReference type="Gene3D" id="2.40.30.20">
    <property type="match status" value="1"/>
</dbReference>
<dbReference type="Gene3D" id="1.20.150.20">
    <property type="entry name" value="ATP synthase alpha/beta chain, C-terminal domain"/>
    <property type="match status" value="1"/>
</dbReference>
<dbReference type="Gene3D" id="3.40.50.300">
    <property type="entry name" value="P-loop containing nucleotide triphosphate hydrolases"/>
    <property type="match status" value="1"/>
</dbReference>
<dbReference type="HAMAP" id="MF_01346">
    <property type="entry name" value="ATP_synth_alpha_bact"/>
    <property type="match status" value="1"/>
</dbReference>
<dbReference type="InterPro" id="IPR023366">
    <property type="entry name" value="ATP_synth_asu-like_sf"/>
</dbReference>
<dbReference type="InterPro" id="IPR000793">
    <property type="entry name" value="ATP_synth_asu_C"/>
</dbReference>
<dbReference type="InterPro" id="IPR038376">
    <property type="entry name" value="ATP_synth_asu_C_sf"/>
</dbReference>
<dbReference type="InterPro" id="IPR033732">
    <property type="entry name" value="ATP_synth_F1_a_nt-bd_dom"/>
</dbReference>
<dbReference type="InterPro" id="IPR005294">
    <property type="entry name" value="ATP_synth_F1_asu"/>
</dbReference>
<dbReference type="InterPro" id="IPR004100">
    <property type="entry name" value="ATPase_F1/V1/A1_a/bsu_N"/>
</dbReference>
<dbReference type="InterPro" id="IPR036121">
    <property type="entry name" value="ATPase_F1/V1/A1_a/bsu_N_sf"/>
</dbReference>
<dbReference type="InterPro" id="IPR000194">
    <property type="entry name" value="ATPase_F1/V1/A1_a/bsu_nucl-bd"/>
</dbReference>
<dbReference type="InterPro" id="IPR027417">
    <property type="entry name" value="P-loop_NTPase"/>
</dbReference>
<dbReference type="NCBIfam" id="TIGR00962">
    <property type="entry name" value="atpA"/>
    <property type="match status" value="1"/>
</dbReference>
<dbReference type="NCBIfam" id="NF009884">
    <property type="entry name" value="PRK13343.1"/>
    <property type="match status" value="1"/>
</dbReference>
<dbReference type="PANTHER" id="PTHR48082">
    <property type="entry name" value="ATP SYNTHASE SUBUNIT ALPHA, MITOCHONDRIAL"/>
    <property type="match status" value="1"/>
</dbReference>
<dbReference type="PANTHER" id="PTHR48082:SF2">
    <property type="entry name" value="ATP SYNTHASE SUBUNIT ALPHA, MITOCHONDRIAL"/>
    <property type="match status" value="1"/>
</dbReference>
<dbReference type="Pfam" id="PF00006">
    <property type="entry name" value="ATP-synt_ab"/>
    <property type="match status" value="1"/>
</dbReference>
<dbReference type="Pfam" id="PF00306">
    <property type="entry name" value="ATP-synt_ab_C"/>
    <property type="match status" value="1"/>
</dbReference>
<dbReference type="Pfam" id="PF02874">
    <property type="entry name" value="ATP-synt_ab_N"/>
    <property type="match status" value="1"/>
</dbReference>
<dbReference type="PIRSF" id="PIRSF039088">
    <property type="entry name" value="F_ATPase_subunit_alpha"/>
    <property type="match status" value="1"/>
</dbReference>
<dbReference type="SUPFAM" id="SSF47917">
    <property type="entry name" value="C-terminal domain of alpha and beta subunits of F1 ATP synthase"/>
    <property type="match status" value="1"/>
</dbReference>
<dbReference type="SUPFAM" id="SSF50615">
    <property type="entry name" value="N-terminal domain of alpha and beta subunits of F1 ATP synthase"/>
    <property type="match status" value="1"/>
</dbReference>
<dbReference type="SUPFAM" id="SSF52540">
    <property type="entry name" value="P-loop containing nucleoside triphosphate hydrolases"/>
    <property type="match status" value="1"/>
</dbReference>
<reference key="1">
    <citation type="journal article" date="2001" name="Microb. Drug Resist.">
        <title>Annotated draft genomic sequence from a Streptococcus pneumoniae type 19F clinical isolate.</title>
        <authorList>
            <person name="Dopazo J."/>
            <person name="Mendoza A."/>
            <person name="Herrero J."/>
            <person name="Caldara F."/>
            <person name="Humbert Y."/>
            <person name="Friedli L."/>
            <person name="Guerrier M."/>
            <person name="Grand-Schenk E."/>
            <person name="Gandin C."/>
            <person name="de Francesco M."/>
            <person name="Polissi A."/>
            <person name="Buell G."/>
            <person name="Feger G."/>
            <person name="Garcia E."/>
            <person name="Peitsch M."/>
            <person name="Garcia-Bustos J.F."/>
        </authorList>
    </citation>
    <scope>NUCLEOTIDE SEQUENCE [LARGE SCALE GENOMIC DNA]</scope>
    <source>
        <strain>G54</strain>
    </source>
</reference>
<reference key="2">
    <citation type="submission" date="2008-03" db="EMBL/GenBank/DDBJ databases">
        <title>Pneumococcal beta glucoside metabolism investigated by whole genome comparison.</title>
        <authorList>
            <person name="Mulas L."/>
            <person name="Trappetti C."/>
            <person name="Hakenbeck R."/>
            <person name="Iannelli F."/>
            <person name="Pozzi G."/>
            <person name="Davidsen T.M."/>
            <person name="Tettelin H."/>
            <person name="Oggioni M."/>
        </authorList>
    </citation>
    <scope>NUCLEOTIDE SEQUENCE [LARGE SCALE GENOMIC DNA]</scope>
    <source>
        <strain>G54</strain>
    </source>
</reference>
<proteinExistence type="inferred from homology"/>
<comment type="function">
    <text evidence="1">Produces ATP from ADP in the presence of a proton gradient across the membrane. The alpha chain is a regulatory subunit.</text>
</comment>
<comment type="catalytic activity">
    <reaction evidence="1">
        <text>ATP + H2O + 4 H(+)(in) = ADP + phosphate + 5 H(+)(out)</text>
        <dbReference type="Rhea" id="RHEA:57720"/>
        <dbReference type="ChEBI" id="CHEBI:15377"/>
        <dbReference type="ChEBI" id="CHEBI:15378"/>
        <dbReference type="ChEBI" id="CHEBI:30616"/>
        <dbReference type="ChEBI" id="CHEBI:43474"/>
        <dbReference type="ChEBI" id="CHEBI:456216"/>
        <dbReference type="EC" id="7.1.2.2"/>
    </reaction>
</comment>
<comment type="subunit">
    <text evidence="1">F-type ATPases have 2 components, CF(1) - the catalytic core - and CF(0) - the membrane proton channel. CF(1) has five subunits: alpha(3), beta(3), gamma(1), delta(1), epsilon(1). CF(0) has three main subunits: a(1), b(2) and c(9-12). The alpha and beta chains form an alternating ring which encloses part of the gamma chain. CF(1) is attached to CF(0) by a central stalk formed by the gamma and epsilon chains, while a peripheral stalk is formed by the delta and b chains.</text>
</comment>
<comment type="subcellular location">
    <subcellularLocation>
        <location evidence="1">Cell membrane</location>
        <topology evidence="1">Peripheral membrane protein</topology>
    </subcellularLocation>
</comment>
<comment type="similarity">
    <text evidence="1">Belongs to the ATPase alpha/beta chains family.</text>
</comment>
<organism>
    <name type="scientific">Streptococcus pneumoniae serotype 19F (strain G54)</name>
    <dbReference type="NCBI Taxonomy" id="512566"/>
    <lineage>
        <taxon>Bacteria</taxon>
        <taxon>Bacillati</taxon>
        <taxon>Bacillota</taxon>
        <taxon>Bacilli</taxon>
        <taxon>Lactobacillales</taxon>
        <taxon>Streptococcaceae</taxon>
        <taxon>Streptococcus</taxon>
    </lineage>
</organism>